<evidence type="ECO:0000255" key="1">
    <source>
        <dbReference type="HAMAP-Rule" id="MF_01059"/>
    </source>
</evidence>
<keyword id="KW-0963">Cytoplasm</keyword>
<keyword id="KW-0326">Glycosidase</keyword>
<keyword id="KW-0378">Hydrolase</keyword>
<reference key="1">
    <citation type="journal article" date="2009" name="PLoS Genet.">
        <title>Organised genome dynamics in the Escherichia coli species results in highly diverse adaptive paths.</title>
        <authorList>
            <person name="Touchon M."/>
            <person name="Hoede C."/>
            <person name="Tenaillon O."/>
            <person name="Barbe V."/>
            <person name="Baeriswyl S."/>
            <person name="Bidet P."/>
            <person name="Bingen E."/>
            <person name="Bonacorsi S."/>
            <person name="Bouchier C."/>
            <person name="Bouvet O."/>
            <person name="Calteau A."/>
            <person name="Chiapello H."/>
            <person name="Clermont O."/>
            <person name="Cruveiller S."/>
            <person name="Danchin A."/>
            <person name="Diard M."/>
            <person name="Dossat C."/>
            <person name="Karoui M.E."/>
            <person name="Frapy E."/>
            <person name="Garry L."/>
            <person name="Ghigo J.M."/>
            <person name="Gilles A.M."/>
            <person name="Johnson J."/>
            <person name="Le Bouguenec C."/>
            <person name="Lescat M."/>
            <person name="Mangenot S."/>
            <person name="Martinez-Jehanne V."/>
            <person name="Matic I."/>
            <person name="Nassif X."/>
            <person name="Oztas S."/>
            <person name="Petit M.A."/>
            <person name="Pichon C."/>
            <person name="Rouy Z."/>
            <person name="Ruf C.S."/>
            <person name="Schneider D."/>
            <person name="Tourret J."/>
            <person name="Vacherie B."/>
            <person name="Vallenet D."/>
            <person name="Medigue C."/>
            <person name="Rocha E.P.C."/>
            <person name="Denamur E."/>
        </authorList>
    </citation>
    <scope>NUCLEOTIDE SEQUENCE [LARGE SCALE GENOMIC DNA]</scope>
    <source>
        <strain>IAI39 / ExPEC</strain>
    </source>
</reference>
<name>TREF_ECO7I</name>
<accession>B7NNF3</accession>
<comment type="function">
    <text evidence="1">Hydrolyzes trehalose to glucose. Could be involved, in cells returning to low osmolarity conditions, in the utilization of the accumulated cytoplasmic trehalose, which was synthesized in response to high osmolarity.</text>
</comment>
<comment type="catalytic activity">
    <reaction evidence="1">
        <text>alpha,alpha-trehalose + H2O = alpha-D-glucose + beta-D-glucose</text>
        <dbReference type="Rhea" id="RHEA:32675"/>
        <dbReference type="ChEBI" id="CHEBI:15377"/>
        <dbReference type="ChEBI" id="CHEBI:15903"/>
        <dbReference type="ChEBI" id="CHEBI:16551"/>
        <dbReference type="ChEBI" id="CHEBI:17925"/>
        <dbReference type="EC" id="3.2.1.28"/>
    </reaction>
</comment>
<comment type="pathway">
    <text evidence="1">Glycan degradation; trehalose degradation; D-glucose from alpha,alpha-trehalose: step 1/1.</text>
</comment>
<comment type="subunit">
    <text evidence="1">Monomer.</text>
</comment>
<comment type="subcellular location">
    <subcellularLocation>
        <location evidence="1">Cytoplasm</location>
    </subcellularLocation>
</comment>
<comment type="similarity">
    <text evidence="1">Belongs to the glycosyl hydrolase 37 family.</text>
</comment>
<sequence length="549" mass="63697">MLNQKIQNPNPDELMIEVDLCYELDPYELKLDEMIEAEPEPEMIEGLPASDALTPADRYLELFEHVQSAKIFPDSKTFPDCAPKMDPLDILIRYRKVRRHRDFDLRKFVENHFWLPEVYSSEYVSDPQNSLKEHIDQLWPVLTREPQDHIPWSSLLALPQSYIVPGGRFSETYYWDSYFTMLGLAESGREDLLKCMADNFAWMIENYGHIPNGNRTYYLSRSQPPVFALMVELFEEDGVRGARRYLDHLKMEYAFWMDGAESLIPNQAYRHVVRMPDGSLLNRYWDDRDTPRDESWLEDVETAKHSGRPPNEVYRDLRAGAASGWDYSSRWLRDTGRLASIRTTQFIPIDLNAFLFKLESAIANISALKGEKETEALFRQKASARRDAVNRYLWDDENGIYRDYDWRREQLALFSAAAIVPLYVGMANHEQADRLANAVRSRLLTPGGILASEYETGEQWDKPNGWAPLQWMAIQGFKMYGDDLLGDEIARSWLKTVNQFYLEQHKLIEKYHIADGVPREGGGGEYPLQDGFGWTNGVVRRLIGLYGEP</sequence>
<gene>
    <name evidence="1" type="primary">treF</name>
    <name type="ordered locus">ECIAI39_4022</name>
</gene>
<proteinExistence type="inferred from homology"/>
<dbReference type="EC" id="3.2.1.28" evidence="1"/>
<dbReference type="EMBL" id="CU928164">
    <property type="protein sequence ID" value="CAR20133.1"/>
    <property type="molecule type" value="Genomic_DNA"/>
</dbReference>
<dbReference type="RefSeq" id="WP_000934216.1">
    <property type="nucleotide sequence ID" value="NC_011750.1"/>
</dbReference>
<dbReference type="RefSeq" id="YP_002409913.1">
    <property type="nucleotide sequence ID" value="NC_011750.1"/>
</dbReference>
<dbReference type="SMR" id="B7NNF3"/>
<dbReference type="STRING" id="585057.ECIAI39_4022"/>
<dbReference type="CAZy" id="GH37">
    <property type="family name" value="Glycoside Hydrolase Family 37"/>
</dbReference>
<dbReference type="KEGG" id="ect:ECIAI39_4022"/>
<dbReference type="PATRIC" id="fig|585057.6.peg.4163"/>
<dbReference type="HOGENOM" id="CLU_006451_3_1_6"/>
<dbReference type="UniPathway" id="UPA00300">
    <property type="reaction ID" value="UER00535"/>
</dbReference>
<dbReference type="Proteomes" id="UP000000749">
    <property type="component" value="Chromosome"/>
</dbReference>
<dbReference type="GO" id="GO:0005737">
    <property type="term" value="C:cytoplasm"/>
    <property type="evidence" value="ECO:0007669"/>
    <property type="project" value="UniProtKB-SubCell"/>
</dbReference>
<dbReference type="GO" id="GO:0004555">
    <property type="term" value="F:alpha,alpha-trehalase activity"/>
    <property type="evidence" value="ECO:0007669"/>
    <property type="project" value="UniProtKB-UniRule"/>
</dbReference>
<dbReference type="GO" id="GO:0071474">
    <property type="term" value="P:cellular hyperosmotic response"/>
    <property type="evidence" value="ECO:0007669"/>
    <property type="project" value="InterPro"/>
</dbReference>
<dbReference type="GO" id="GO:0005993">
    <property type="term" value="P:trehalose catabolic process"/>
    <property type="evidence" value="ECO:0007669"/>
    <property type="project" value="UniProtKB-UniRule"/>
</dbReference>
<dbReference type="FunFam" id="1.50.10.10:FF:000003">
    <property type="entry name" value="Cytoplasmic trehalase"/>
    <property type="match status" value="1"/>
</dbReference>
<dbReference type="Gene3D" id="1.50.10.10">
    <property type="match status" value="1"/>
</dbReference>
<dbReference type="HAMAP" id="MF_01059">
    <property type="entry name" value="Cyt_trehalase"/>
    <property type="match status" value="1"/>
</dbReference>
<dbReference type="InterPro" id="IPR008928">
    <property type="entry name" value="6-hairpin_glycosidase_sf"/>
</dbReference>
<dbReference type="InterPro" id="IPR012341">
    <property type="entry name" value="6hp_glycosidase-like_sf"/>
</dbReference>
<dbReference type="InterPro" id="IPR023715">
    <property type="entry name" value="Cyt_trehalase"/>
</dbReference>
<dbReference type="InterPro" id="IPR001661">
    <property type="entry name" value="Glyco_hydro_37"/>
</dbReference>
<dbReference type="InterPro" id="IPR018232">
    <property type="entry name" value="Glyco_hydro_37_CS"/>
</dbReference>
<dbReference type="NCBIfam" id="NF009773">
    <property type="entry name" value="PRK13270.1"/>
    <property type="match status" value="1"/>
</dbReference>
<dbReference type="NCBIfam" id="NF009774">
    <property type="entry name" value="PRK13271.1"/>
    <property type="match status" value="1"/>
</dbReference>
<dbReference type="PANTHER" id="PTHR23403:SF8">
    <property type="entry name" value="CYTOPLASMIC TREHALASE"/>
    <property type="match status" value="1"/>
</dbReference>
<dbReference type="PANTHER" id="PTHR23403">
    <property type="entry name" value="TREHALASE"/>
    <property type="match status" value="1"/>
</dbReference>
<dbReference type="Pfam" id="PF01204">
    <property type="entry name" value="Trehalase"/>
    <property type="match status" value="1"/>
</dbReference>
<dbReference type="PRINTS" id="PR00744">
    <property type="entry name" value="GLHYDRLASE37"/>
</dbReference>
<dbReference type="SUPFAM" id="SSF48208">
    <property type="entry name" value="Six-hairpin glycosidases"/>
    <property type="match status" value="1"/>
</dbReference>
<dbReference type="PROSITE" id="PS00927">
    <property type="entry name" value="TREHALASE_1"/>
    <property type="match status" value="1"/>
</dbReference>
<dbReference type="PROSITE" id="PS00928">
    <property type="entry name" value="TREHALASE_2"/>
    <property type="match status" value="1"/>
</dbReference>
<feature type="chain" id="PRO_1000136401" description="Cytoplasmic trehalase">
    <location>
        <begin position="1"/>
        <end position="549"/>
    </location>
</feature>
<feature type="active site" description="Proton donor/acceptor" evidence="1">
    <location>
        <position position="326"/>
    </location>
</feature>
<feature type="active site" description="Proton donor/acceptor" evidence="1">
    <location>
        <position position="509"/>
    </location>
</feature>
<feature type="binding site" evidence="1">
    <location>
        <position position="168"/>
    </location>
    <ligand>
        <name>substrate</name>
    </ligand>
</feature>
<feature type="binding site" evidence="1">
    <location>
        <begin position="175"/>
        <end position="176"/>
    </location>
    <ligand>
        <name>substrate</name>
    </ligand>
</feature>
<feature type="binding site" evidence="1">
    <location>
        <position position="212"/>
    </location>
    <ligand>
        <name>substrate</name>
    </ligand>
</feature>
<feature type="binding site" evidence="1">
    <location>
        <begin position="221"/>
        <end position="223"/>
    </location>
    <ligand>
        <name>substrate</name>
    </ligand>
</feature>
<feature type="binding site" evidence="1">
    <location>
        <begin position="292"/>
        <end position="294"/>
    </location>
    <ligand>
        <name>substrate</name>
    </ligand>
</feature>
<feature type="binding site" evidence="1">
    <location>
        <position position="324"/>
    </location>
    <ligand>
        <name>substrate</name>
    </ligand>
</feature>
<feature type="binding site" evidence="1">
    <location>
        <position position="525"/>
    </location>
    <ligand>
        <name>substrate</name>
    </ligand>
</feature>
<organism>
    <name type="scientific">Escherichia coli O7:K1 (strain IAI39 / ExPEC)</name>
    <dbReference type="NCBI Taxonomy" id="585057"/>
    <lineage>
        <taxon>Bacteria</taxon>
        <taxon>Pseudomonadati</taxon>
        <taxon>Pseudomonadota</taxon>
        <taxon>Gammaproteobacteria</taxon>
        <taxon>Enterobacterales</taxon>
        <taxon>Enterobacteriaceae</taxon>
        <taxon>Escherichia</taxon>
    </lineage>
</organism>
<protein>
    <recommendedName>
        <fullName evidence="1">Cytoplasmic trehalase</fullName>
        <ecNumber evidence="1">3.2.1.28</ecNumber>
    </recommendedName>
    <alternativeName>
        <fullName evidence="1">Alpha,alpha-trehalase</fullName>
    </alternativeName>
    <alternativeName>
        <fullName evidence="1">Alpha,alpha-trehalose glucohydrolase</fullName>
    </alternativeName>
</protein>